<reference key="1">
    <citation type="journal article" date="2004" name="Nat. Genet.">
        <title>Complete sequencing and characterization of 21,243 full-length human cDNAs.</title>
        <authorList>
            <person name="Ota T."/>
            <person name="Suzuki Y."/>
            <person name="Nishikawa T."/>
            <person name="Otsuki T."/>
            <person name="Sugiyama T."/>
            <person name="Irie R."/>
            <person name="Wakamatsu A."/>
            <person name="Hayashi K."/>
            <person name="Sato H."/>
            <person name="Nagai K."/>
            <person name="Kimura K."/>
            <person name="Makita H."/>
            <person name="Sekine M."/>
            <person name="Obayashi M."/>
            <person name="Nishi T."/>
            <person name="Shibahara T."/>
            <person name="Tanaka T."/>
            <person name="Ishii S."/>
            <person name="Yamamoto J."/>
            <person name="Saito K."/>
            <person name="Kawai Y."/>
            <person name="Isono Y."/>
            <person name="Nakamura Y."/>
            <person name="Nagahari K."/>
            <person name="Murakami K."/>
            <person name="Yasuda T."/>
            <person name="Iwayanagi T."/>
            <person name="Wagatsuma M."/>
            <person name="Shiratori A."/>
            <person name="Sudo H."/>
            <person name="Hosoiri T."/>
            <person name="Kaku Y."/>
            <person name="Kodaira H."/>
            <person name="Kondo H."/>
            <person name="Sugawara M."/>
            <person name="Takahashi M."/>
            <person name="Kanda K."/>
            <person name="Yokoi T."/>
            <person name="Furuya T."/>
            <person name="Kikkawa E."/>
            <person name="Omura Y."/>
            <person name="Abe K."/>
            <person name="Kamihara K."/>
            <person name="Katsuta N."/>
            <person name="Sato K."/>
            <person name="Tanikawa M."/>
            <person name="Yamazaki M."/>
            <person name="Ninomiya K."/>
            <person name="Ishibashi T."/>
            <person name="Yamashita H."/>
            <person name="Murakawa K."/>
            <person name="Fujimori K."/>
            <person name="Tanai H."/>
            <person name="Kimata M."/>
            <person name="Watanabe M."/>
            <person name="Hiraoka S."/>
            <person name="Chiba Y."/>
            <person name="Ishida S."/>
            <person name="Ono Y."/>
            <person name="Takiguchi S."/>
            <person name="Watanabe S."/>
            <person name="Yosida M."/>
            <person name="Hotuta T."/>
            <person name="Kusano J."/>
            <person name="Kanehori K."/>
            <person name="Takahashi-Fujii A."/>
            <person name="Hara H."/>
            <person name="Tanase T.-O."/>
            <person name="Nomura Y."/>
            <person name="Togiya S."/>
            <person name="Komai F."/>
            <person name="Hara R."/>
            <person name="Takeuchi K."/>
            <person name="Arita M."/>
            <person name="Imose N."/>
            <person name="Musashino K."/>
            <person name="Yuuki H."/>
            <person name="Oshima A."/>
            <person name="Sasaki N."/>
            <person name="Aotsuka S."/>
            <person name="Yoshikawa Y."/>
            <person name="Matsunawa H."/>
            <person name="Ichihara T."/>
            <person name="Shiohata N."/>
            <person name="Sano S."/>
            <person name="Moriya S."/>
            <person name="Momiyama H."/>
            <person name="Satoh N."/>
            <person name="Takami S."/>
            <person name="Terashima Y."/>
            <person name="Suzuki O."/>
            <person name="Nakagawa S."/>
            <person name="Senoh A."/>
            <person name="Mizoguchi H."/>
            <person name="Goto Y."/>
            <person name="Shimizu F."/>
            <person name="Wakebe H."/>
            <person name="Hishigaki H."/>
            <person name="Watanabe T."/>
            <person name="Sugiyama A."/>
            <person name="Takemoto M."/>
            <person name="Kawakami B."/>
            <person name="Yamazaki M."/>
            <person name="Watanabe K."/>
            <person name="Kumagai A."/>
            <person name="Itakura S."/>
            <person name="Fukuzumi Y."/>
            <person name="Fujimori Y."/>
            <person name="Komiyama M."/>
            <person name="Tashiro H."/>
            <person name="Tanigami A."/>
            <person name="Fujiwara T."/>
            <person name="Ono T."/>
            <person name="Yamada K."/>
            <person name="Fujii Y."/>
            <person name="Ozaki K."/>
            <person name="Hirao M."/>
            <person name="Ohmori Y."/>
            <person name="Kawabata A."/>
            <person name="Hikiji T."/>
            <person name="Kobatake N."/>
            <person name="Inagaki H."/>
            <person name="Ikema Y."/>
            <person name="Okamoto S."/>
            <person name="Okitani R."/>
            <person name="Kawakami T."/>
            <person name="Noguchi S."/>
            <person name="Itoh T."/>
            <person name="Shigeta K."/>
            <person name="Senba T."/>
            <person name="Matsumura K."/>
            <person name="Nakajima Y."/>
            <person name="Mizuno T."/>
            <person name="Morinaga M."/>
            <person name="Sasaki M."/>
            <person name="Togashi T."/>
            <person name="Oyama M."/>
            <person name="Hata H."/>
            <person name="Watanabe M."/>
            <person name="Komatsu T."/>
            <person name="Mizushima-Sugano J."/>
            <person name="Satoh T."/>
            <person name="Shirai Y."/>
            <person name="Takahashi Y."/>
            <person name="Nakagawa K."/>
            <person name="Okumura K."/>
            <person name="Nagase T."/>
            <person name="Nomura N."/>
            <person name="Kikuchi H."/>
            <person name="Masuho Y."/>
            <person name="Yamashita R."/>
            <person name="Nakai K."/>
            <person name="Yada T."/>
            <person name="Nakamura Y."/>
            <person name="Ohara O."/>
            <person name="Isogai T."/>
            <person name="Sugano S."/>
        </authorList>
    </citation>
    <scope>NUCLEOTIDE SEQUENCE [LARGE SCALE MRNA]</scope>
    <source>
        <tissue>Skeletal muscle</tissue>
    </source>
</reference>
<reference key="2">
    <citation type="journal article" date="2004" name="Genome Res.">
        <title>The status, quality, and expansion of the NIH full-length cDNA project: the Mammalian Gene Collection (MGC).</title>
        <authorList>
            <consortium name="The MGC Project Team"/>
        </authorList>
    </citation>
    <scope>NUCLEOTIDE SEQUENCE [LARGE SCALE MRNA]</scope>
    <source>
        <tissue>Cervix</tissue>
    </source>
</reference>
<reference key="3">
    <citation type="journal article" date="2005" name="Mol. Cell. Biol.">
        <title>Human MMS21/NSE2 is a SUMO ligase required for DNA repair.</title>
        <authorList>
            <person name="Potts P.R."/>
            <person name="Yu H."/>
        </authorList>
    </citation>
    <scope>FUNCTION</scope>
    <scope>SUMOYLATION</scope>
    <scope>INTERACTION WITH SMC5 AND SMC6</scope>
    <scope>MUTAGENESIS OF CYS-169; CYS-185; HIS-187; CYS-210 AND CYS-215</scope>
</reference>
<reference key="4">
    <citation type="journal article" date="2006" name="EMBO J.">
        <title>Human SMC5/6 complex promotes sister chromatid homologous recombination by recruiting the SMC1/3 cohesin complex to double-strand breaks.</title>
        <authorList>
            <person name="Potts P.R."/>
            <person name="Porteus M.H."/>
            <person name="Yu H."/>
        </authorList>
    </citation>
    <scope>FUNCTION</scope>
</reference>
<reference key="5">
    <citation type="journal article" date="2007" name="Nat. Struct. Mol. Biol.">
        <title>The SMC5/6 complex maintains telomere length in ALT cancer cells through SUMOylation of telomere-binding proteins.</title>
        <authorList>
            <person name="Potts P.R."/>
            <person name="Yu H."/>
        </authorList>
    </citation>
    <scope>FUNCTION</scope>
    <scope>SUBCELLULAR LOCATION</scope>
</reference>
<reference key="6">
    <citation type="journal article" date="2008" name="Mol. Cell. Biol.">
        <title>Identification of the proteins, including MAGEG1, that make up the human SMC5-6 protein complex.</title>
        <authorList>
            <person name="Taylor E.M."/>
            <person name="Copsey A.C."/>
            <person name="Hudson J.J."/>
            <person name="Vidot S."/>
            <person name="Lehmann A.R."/>
        </authorList>
    </citation>
    <scope>SUBCELLULAR LOCATION</scope>
    <scope>INTERACTION WITH NSMCE1</scope>
    <scope>IDENTIFICATION IN THE SMC5-SMC6 COMPLEX</scope>
    <scope>SUMOYLATION</scope>
</reference>
<reference key="7">
    <citation type="journal article" date="2008" name="Proc. Natl. Acad. Sci. U.S.A.">
        <title>A quantitative atlas of mitotic phosphorylation.</title>
        <authorList>
            <person name="Dephoure N."/>
            <person name="Zhou C."/>
            <person name="Villen J."/>
            <person name="Beausoleil S.A."/>
            <person name="Bakalarski C.E."/>
            <person name="Elledge S.J."/>
            <person name="Gygi S.P."/>
        </authorList>
    </citation>
    <scope>IDENTIFICATION BY MASS SPECTROMETRY [LARGE SCALE ANALYSIS]</scope>
    <source>
        <tissue>Cervix carcinoma</tissue>
    </source>
</reference>
<reference key="8">
    <citation type="journal article" date="2009" name="Cell Cycle">
        <title>SMC5 and MMS21 are required for chromosome cohesion and mitotic progression.</title>
        <authorList>
            <person name="Behlke-Steinert S."/>
            <person name="Touat-Todeschini L."/>
            <person name="Skoufias D.A."/>
            <person name="Margolis R.L."/>
        </authorList>
    </citation>
    <scope>FUNCTION</scope>
</reference>
<reference key="9">
    <citation type="journal article" date="2009" name="Sci. Signal.">
        <title>Quantitative phosphoproteomic analysis of T cell receptor signaling reveals system-wide modulation of protein-protein interactions.</title>
        <authorList>
            <person name="Mayya V."/>
            <person name="Lundgren D.H."/>
            <person name="Hwang S.-I."/>
            <person name="Rezaul K."/>
            <person name="Wu L."/>
            <person name="Eng J.K."/>
            <person name="Rodionov V."/>
            <person name="Han D.K."/>
        </authorList>
    </citation>
    <scope>IDENTIFICATION BY MASS SPECTROMETRY [LARGE SCALE ANALYSIS]</scope>
    <source>
        <tissue>Leukemic T-cell</tissue>
    </source>
</reference>
<reference key="10">
    <citation type="journal article" date="2010" name="Sci. Signal.">
        <title>Quantitative phosphoproteomics reveals widespread full phosphorylation site occupancy during mitosis.</title>
        <authorList>
            <person name="Olsen J.V."/>
            <person name="Vermeulen M."/>
            <person name="Santamaria A."/>
            <person name="Kumar C."/>
            <person name="Miller M.L."/>
            <person name="Jensen L.J."/>
            <person name="Gnad F."/>
            <person name="Cox J."/>
            <person name="Jensen T.S."/>
            <person name="Nigg E.A."/>
            <person name="Brunak S."/>
            <person name="Mann M."/>
        </authorList>
    </citation>
    <scope>ACETYLATION [LARGE SCALE ANALYSIS] AT MET-1</scope>
    <scope>IDENTIFICATION BY MASS SPECTROMETRY [LARGE SCALE ANALYSIS]</scope>
    <source>
        <tissue>Cervix carcinoma</tissue>
    </source>
</reference>
<reference key="11">
    <citation type="journal article" date="2011" name="BMC Syst. Biol.">
        <title>Initial characterization of the human central proteome.</title>
        <authorList>
            <person name="Burkard T.R."/>
            <person name="Planyavsky M."/>
            <person name="Kaupe I."/>
            <person name="Breitwieser F.P."/>
            <person name="Buerckstuemmer T."/>
            <person name="Bennett K.L."/>
            <person name="Superti-Furga G."/>
            <person name="Colinge J."/>
        </authorList>
    </citation>
    <scope>IDENTIFICATION BY MASS SPECTROMETRY [LARGE SCALE ANALYSIS]</scope>
</reference>
<reference key="12">
    <citation type="journal article" date="2013" name="J. Proteome Res.">
        <title>Toward a comprehensive characterization of a human cancer cell phosphoproteome.</title>
        <authorList>
            <person name="Zhou H."/>
            <person name="Di Palma S."/>
            <person name="Preisinger C."/>
            <person name="Peng M."/>
            <person name="Polat A.N."/>
            <person name="Heck A.J."/>
            <person name="Mohammed S."/>
        </authorList>
    </citation>
    <scope>PHOSPHORYLATION [LARGE SCALE ANALYSIS] AT SER-116</scope>
    <scope>IDENTIFICATION BY MASS SPECTROMETRY [LARGE SCALE ANALYSIS]</scope>
    <source>
        <tissue>Cervix carcinoma</tissue>
        <tissue>Erythroleukemia</tissue>
    </source>
</reference>
<reference key="13">
    <citation type="journal article" date="2014" name="J. Clin. Invest.">
        <title>Hypomorphism in human NSMCE2 linked to primordial dwarfism and insulin resistance.</title>
        <authorList>
            <person name="Payne F."/>
            <person name="Colnaghi R."/>
            <person name="Rocha N."/>
            <person name="Seth A."/>
            <person name="Harris J."/>
            <person name="Carpenter G."/>
            <person name="Bottomley W.E."/>
            <person name="Wheeler E."/>
            <person name="Wong S."/>
            <person name="Saudek V."/>
            <person name="Savage D."/>
            <person name="O'Rahilly S."/>
            <person name="Carel J.C."/>
            <person name="Barroso I."/>
            <person name="O'Driscoll M."/>
            <person name="Semple R."/>
        </authorList>
    </citation>
    <scope>INVOLVEMENT IN SCKL10</scope>
</reference>
<reference key="14">
    <citation type="journal article" date="2017" name="Nat. Struct. Mol. Biol.">
        <title>Site-specific mapping of the human SUMO proteome reveals co-modification with phosphorylation.</title>
        <authorList>
            <person name="Hendriks I.A."/>
            <person name="Lyon D."/>
            <person name="Young C."/>
            <person name="Jensen L.J."/>
            <person name="Vertegaal A.C."/>
            <person name="Nielsen M.L."/>
        </authorList>
    </citation>
    <scope>SUMOYLATION [LARGE SCALE ANALYSIS] AT LYS-90; LYS-107; LYS-125 AND LYS-130</scope>
    <scope>IDENTIFICATION BY MASS SPECTROMETRY [LARGE SCALE ANALYSIS]</scope>
</reference>
<reference key="15">
    <citation type="journal article" date="2019" name="Mol. Cell">
        <title>RAD51AP1 is an essential mediator of alternative lengthening of telomeres.</title>
        <authorList>
            <person name="Barroso-Gonzalez J."/>
            <person name="Garcia-Exposito L."/>
            <person name="Hoang S.M."/>
            <person name="Lynskey M.L."/>
            <person name="Roncaioli J.L."/>
            <person name="Ghosh A."/>
            <person name="Wallace C.T."/>
            <person name="de Vitis M."/>
            <person name="Modesti M."/>
            <person name="Bernstein K.A."/>
            <person name="Sarkar S.N."/>
            <person name="Watkins S.C."/>
            <person name="O'Sullivan R.J."/>
        </authorList>
    </citation>
    <scope>FUNCTION</scope>
</reference>
<reference key="16">
    <citation type="journal article" date="2019" name="Mol. Cell">
        <title>RAD51AP1 is an essential mediator of alternative lengthening of telomeres.</title>
        <authorList>
            <person name="Barroso-Gonzalez J."/>
            <person name="Garcia-Exposito L."/>
            <person name="Hoang S.M."/>
            <person name="Lynskey M.L."/>
            <person name="Roncaioli J.L."/>
            <person name="Ghosh A."/>
            <person name="Wallace C.T."/>
            <person name="Modesti M."/>
            <person name="Bernstein K.A."/>
            <person name="Sarkar S.N."/>
            <person name="Watkins S.C."/>
            <person name="O'Sullivan R.J."/>
        </authorList>
    </citation>
    <scope>ERRATUM OF PUBMED:31400850</scope>
</reference>
<reference key="17">
    <citation type="submission" date="2007-10" db="PDB data bank">
        <title>Solution structure of the SP-RING domain in non-SMC element 2 homolog (MMS21, S. cerevisiae).</title>
        <authorList>
            <consortium name="RIKEN structural genomics initiative (RSGI)"/>
        </authorList>
    </citation>
    <scope>STRUCTURE BY NMR OF 168-247</scope>
</reference>
<reference key="18">
    <citation type="journal article" date="2006" name="Science">
        <title>The consensus coding sequences of human breast and colorectal cancers.</title>
        <authorList>
            <person name="Sjoeblom T."/>
            <person name="Jones S."/>
            <person name="Wood L.D."/>
            <person name="Parsons D.W."/>
            <person name="Lin J."/>
            <person name="Barber T.D."/>
            <person name="Mandelker D."/>
            <person name="Leary R.J."/>
            <person name="Ptak J."/>
            <person name="Silliman N."/>
            <person name="Szabo S."/>
            <person name="Buckhaults P."/>
            <person name="Farrell C."/>
            <person name="Meeh P."/>
            <person name="Markowitz S.D."/>
            <person name="Willis J."/>
            <person name="Dawson D."/>
            <person name="Willson J.K.V."/>
            <person name="Gazdar A.F."/>
            <person name="Hartigan J."/>
            <person name="Wu L."/>
            <person name="Liu C."/>
            <person name="Parmigiani G."/>
            <person name="Park B.H."/>
            <person name="Bachman K.E."/>
            <person name="Papadopoulos N."/>
            <person name="Vogelstein B."/>
            <person name="Kinzler K.W."/>
            <person name="Velculescu V.E."/>
        </authorList>
    </citation>
    <scope>VARIANT [LARGE SCALE ANALYSIS] PHE-27</scope>
</reference>
<gene>
    <name type="primary">NSMCE2</name>
    <name type="synonym">C8orf36</name>
    <name type="synonym">MMS21</name>
</gene>
<proteinExistence type="evidence at protein level"/>
<sequence>MPGRSSSNSGSTGFISFSGVESALSSLKNFQACINSGMDTASSVALDLVESQTEVSSEYSMDKAMVEFATLDRQLNHYVKAVQSTINHVKEERPEKIPDLKLLVEKKFLALQSKNSDADFQNNEKFVQFKQQLKELKKQCGLQADREADGTEGVDEDIIVTQSQTNFTCPITKEEMKKPVKNKVCGHTYEEDAIVRMIESRQKRKKKAYCPQIGCSHTDIRKSDLIQDEALRRAIENHNKKRHRHSE</sequence>
<accession>Q96MF7</accession>
<accession>Q8N549</accession>
<name>NSE2_HUMAN</name>
<comment type="function">
    <text evidence="2 3 5 7 9">E3 SUMO-protein ligase component of the SMC5-SMC6 complex, a complex involved in DNA double-strand break repair by homologous recombination (PubMed:16055714, PubMed:16810316). Is not be required for the stability of the complex (PubMed:16055714, PubMed:16810316). The complex may promote sister chromatid homologous recombination by recruiting the SMC1-SMC3 cohesin complex to double-strand breaks (PubMed:16055714, PubMed:16810316). The complex is required for telomere maintenance via recombination in ALT (alternative lengthening of telomeres) cell lines and mediates sumoylation of shelterin complex (telosome) components which is proposed to lead to shelterin complex disassembly in ALT-associated PML bodies (APBs) (PubMed:17589526). Acts as an E3 ligase mediating SUMO attachment to various proteins such as SMC6L1 and TSNAX, the shelterin complex subunits TERF1, TERF2, TINF2 and TERF2IP, RAD51AP1, and maybe the cohesin components RAD21 and STAG2 (PubMed:16055714, PubMed:16810316, PubMed:17589526, PubMed:31400850). Required for recruitment of telomeres to PML nuclear bodies (PubMed:17589526). SUMO protein-ligase activity is required for the prevention of DNA damage-induced apoptosis by facilitating DNA repair, and for formation of APBs in ALT cell lines (PubMed:17589526). Required for sister chromatid cohesion during prometaphase and mitotic progression (PubMed:19502785).</text>
</comment>
<comment type="pathway">
    <text evidence="2 3 5 9">Protein modification; protein sumoylation.</text>
</comment>
<comment type="subunit">
    <text evidence="6">Component of the SMC5-SMC6 complex which consists at least of SMC5, SMC6, NSMCE2, NSMCE1, NSMCE4A or EID3 and NSMCE3.</text>
</comment>
<comment type="interaction">
    <interactant intactId="EBI-2557388">
        <id>Q96MF7</id>
    </interactant>
    <interactant intactId="EBI-10976677">
        <id>G5E9A7</id>
        <label>DMWD</label>
    </interactant>
    <organismsDiffer>false</organismsDiffer>
    <experiments>3</experiments>
</comment>
<comment type="interaction">
    <interactant intactId="EBI-2557388">
        <id>Q96MF7</id>
    </interactant>
    <interactant intactId="EBI-21603100">
        <id>P26378-2</id>
        <label>ELAVL4</label>
    </interactant>
    <organismsDiffer>false</organismsDiffer>
    <experiments>3</experiments>
</comment>
<comment type="interaction">
    <interactant intactId="EBI-2557388">
        <id>Q96MF7</id>
    </interactant>
    <interactant intactId="EBI-348399">
        <id>P22607</id>
        <label>FGFR3</label>
    </interactant>
    <organismsDiffer>false</organismsDiffer>
    <experiments>3</experiments>
</comment>
<comment type="interaction">
    <interactant intactId="EBI-2557388">
        <id>Q96MF7</id>
    </interactant>
    <interactant intactId="EBI-351506">
        <id>P06396</id>
        <label>GSN</label>
    </interactant>
    <organismsDiffer>false</organismsDiffer>
    <experiments>3</experiments>
</comment>
<comment type="interaction">
    <interactant intactId="EBI-2557388">
        <id>Q96MF7</id>
    </interactant>
    <interactant intactId="EBI-10975473">
        <id>O60333-2</id>
        <label>KIF1B</label>
    </interactant>
    <organismsDiffer>false</organismsDiffer>
    <experiments>3</experiments>
</comment>
<comment type="interaction">
    <interactant intactId="EBI-2557388">
        <id>Q96MF7</id>
    </interactant>
    <interactant intactId="EBI-605415">
        <id>Q96SB8</id>
        <label>SMC6</label>
    </interactant>
    <organismsDiffer>false</organismsDiffer>
    <experiments>4</experiments>
</comment>
<comment type="interaction">
    <interactant intactId="EBI-2557388">
        <id>Q96MF7</id>
    </interactant>
    <interactant intactId="EBI-5235340">
        <id>Q7Z699</id>
        <label>SPRED1</label>
    </interactant>
    <organismsDiffer>false</organismsDiffer>
    <experiments>3</experiments>
</comment>
<comment type="interaction">
    <interactant intactId="EBI-2557388">
        <id>Q96MF7</id>
    </interactant>
    <interactant intactId="EBI-359793">
        <id>P40222</id>
        <label>TXLNA</label>
    </interactant>
    <organismsDiffer>false</organismsDiffer>
    <experiments>6</experiments>
</comment>
<comment type="subcellular location">
    <subcellularLocation>
        <location evidence="6">Nucleus</location>
    </subcellularLocation>
    <subcellularLocation>
        <location evidence="5">Chromosome</location>
        <location evidence="5">Telomere</location>
    </subcellularLocation>
    <subcellularLocation>
        <location evidence="5">Nucleus</location>
        <location evidence="5">PML body</location>
    </subcellularLocation>
    <text evidence="5">Localizes to PML nuclear bodies in ALT cell lines.</text>
</comment>
<comment type="PTM">
    <text evidence="2 6">Sumoylated, possibly via autosumoylation.</text>
</comment>
<comment type="disease" evidence="8">
    <disease id="DI-04892">
        <name>Seckel syndrome 10</name>
        <acronym>SCKL10</acronym>
        <description>A form of Seckel syndrome, a rare autosomal recessive disorder characterized by proportionate dwarfism of prenatal onset associated with low birth weight, growth retardation, severe microcephaly with a bird-headed like appearance, and intellectual disability.</description>
        <dbReference type="MIM" id="617253"/>
    </disease>
    <text>The disease is caused by variants affecting the gene represented in this entry.</text>
</comment>
<comment type="similarity">
    <text evidence="10">Belongs to the NSE2 family.</text>
</comment>
<protein>
    <recommendedName>
        <fullName>E3 SUMO-protein ligase NSE2</fullName>
        <ecNumber evidence="5 9">2.3.2.-</ecNumber>
    </recommendedName>
    <alternativeName>
        <fullName evidence="10">E3 SUMO-protein transferase NSE2</fullName>
    </alternativeName>
    <alternativeName>
        <fullName>MMS21 homolog</fullName>
        <shortName>hMMS21</shortName>
    </alternativeName>
    <alternativeName>
        <fullName>Non-structural maintenance of chromosomes element 2 homolog</fullName>
        <shortName>Non-SMC element 2 homolog</shortName>
    </alternativeName>
</protein>
<dbReference type="EC" id="2.3.2.-" evidence="5 9"/>
<dbReference type="EMBL" id="AK057002">
    <property type="protein sequence ID" value="BAB71338.1"/>
    <property type="molecule type" value="mRNA"/>
</dbReference>
<dbReference type="EMBL" id="BC032797">
    <property type="protein sequence ID" value="AAH32797.1"/>
    <property type="molecule type" value="mRNA"/>
</dbReference>
<dbReference type="CCDS" id="CCDS6356.1"/>
<dbReference type="RefSeq" id="NP_001336414.1">
    <property type="nucleotide sequence ID" value="NM_001349485.2"/>
</dbReference>
<dbReference type="RefSeq" id="NP_001336415.1">
    <property type="nucleotide sequence ID" value="NM_001349486.2"/>
</dbReference>
<dbReference type="RefSeq" id="NP_775956.1">
    <property type="nucleotide sequence ID" value="NM_173685.4"/>
</dbReference>
<dbReference type="RefSeq" id="XP_005250932.1">
    <property type="nucleotide sequence ID" value="XM_005250875.2"/>
</dbReference>
<dbReference type="RefSeq" id="XP_005250933.1">
    <property type="nucleotide sequence ID" value="XM_005250876.4"/>
</dbReference>
<dbReference type="RefSeq" id="XP_011515276.1">
    <property type="nucleotide sequence ID" value="XM_011516974.3"/>
</dbReference>
<dbReference type="RefSeq" id="XP_011515277.1">
    <property type="nucleotide sequence ID" value="XM_011516975.3"/>
</dbReference>
<dbReference type="RefSeq" id="XP_016868820.1">
    <property type="nucleotide sequence ID" value="XM_017013331.2"/>
</dbReference>
<dbReference type="RefSeq" id="XP_024302898.1">
    <property type="nucleotide sequence ID" value="XM_024447130.2"/>
</dbReference>
<dbReference type="RefSeq" id="XP_047277658.1">
    <property type="nucleotide sequence ID" value="XM_047421702.1"/>
</dbReference>
<dbReference type="RefSeq" id="XP_047277659.1">
    <property type="nucleotide sequence ID" value="XM_047421703.1"/>
</dbReference>
<dbReference type="RefSeq" id="XP_047277661.1">
    <property type="nucleotide sequence ID" value="XM_047421705.1"/>
</dbReference>
<dbReference type="RefSeq" id="XP_054216281.1">
    <property type="nucleotide sequence ID" value="XM_054360306.1"/>
</dbReference>
<dbReference type="RefSeq" id="XP_054216282.1">
    <property type="nucleotide sequence ID" value="XM_054360307.1"/>
</dbReference>
<dbReference type="RefSeq" id="XP_054216283.1">
    <property type="nucleotide sequence ID" value="XM_054360308.1"/>
</dbReference>
<dbReference type="RefSeq" id="XP_054216284.1">
    <property type="nucleotide sequence ID" value="XM_054360309.1"/>
</dbReference>
<dbReference type="RefSeq" id="XP_054216285.1">
    <property type="nucleotide sequence ID" value="XM_054360310.1"/>
</dbReference>
<dbReference type="RefSeq" id="XP_054216286.1">
    <property type="nucleotide sequence ID" value="XM_054360311.1"/>
</dbReference>
<dbReference type="PDB" id="2YU4">
    <property type="method" value="NMR"/>
    <property type="chains" value="A=167-247"/>
</dbReference>
<dbReference type="PDBsum" id="2YU4"/>
<dbReference type="SMR" id="Q96MF7"/>
<dbReference type="BioGRID" id="130282">
    <property type="interactions" value="46"/>
</dbReference>
<dbReference type="ComplexPortal" id="CPX-5992">
    <property type="entry name" value="SMC5-SMC6 SUMO ligase complex, EID3 variant"/>
</dbReference>
<dbReference type="ComplexPortal" id="CPX-6086">
    <property type="entry name" value="SMC5-SMC6 SUMO ligase complex, NSE4EA variant"/>
</dbReference>
<dbReference type="CORUM" id="Q96MF7"/>
<dbReference type="FunCoup" id="Q96MF7">
    <property type="interactions" value="2814"/>
</dbReference>
<dbReference type="IntAct" id="Q96MF7">
    <property type="interactions" value="30"/>
</dbReference>
<dbReference type="MINT" id="Q96MF7"/>
<dbReference type="STRING" id="9606.ENSP00000287437"/>
<dbReference type="GlyGen" id="Q96MF7">
    <property type="glycosylation" value="1 site, 1 O-linked glycan (1 site)"/>
</dbReference>
<dbReference type="iPTMnet" id="Q96MF7"/>
<dbReference type="PhosphoSitePlus" id="Q96MF7"/>
<dbReference type="BioMuta" id="NSMCE2"/>
<dbReference type="DMDM" id="122064623"/>
<dbReference type="jPOST" id="Q96MF7"/>
<dbReference type="MassIVE" id="Q96MF7"/>
<dbReference type="PaxDb" id="9606-ENSP00000287437"/>
<dbReference type="PeptideAtlas" id="Q96MF7"/>
<dbReference type="ProteomicsDB" id="77350"/>
<dbReference type="Pumba" id="Q96MF7"/>
<dbReference type="Antibodypedia" id="27202">
    <property type="antibodies" value="312 antibodies from 35 providers"/>
</dbReference>
<dbReference type="DNASU" id="286053"/>
<dbReference type="Ensembl" id="ENST00000287437.8">
    <property type="protein sequence ID" value="ENSP00000287437.3"/>
    <property type="gene ID" value="ENSG00000156831.9"/>
</dbReference>
<dbReference type="Ensembl" id="ENST00000522563.6">
    <property type="protein sequence ID" value="ENSP00000430668.1"/>
    <property type="gene ID" value="ENSG00000156831.9"/>
</dbReference>
<dbReference type="GeneID" id="286053"/>
<dbReference type="KEGG" id="hsa:286053"/>
<dbReference type="MANE-Select" id="ENST00000287437.8">
    <property type="protein sequence ID" value="ENSP00000287437.3"/>
    <property type="RefSeq nucleotide sequence ID" value="NM_173685.4"/>
    <property type="RefSeq protein sequence ID" value="NP_775956.1"/>
</dbReference>
<dbReference type="UCSC" id="uc003yrw.3">
    <property type="organism name" value="human"/>
</dbReference>
<dbReference type="AGR" id="HGNC:26513"/>
<dbReference type="CTD" id="286053"/>
<dbReference type="DisGeNET" id="286053"/>
<dbReference type="GeneCards" id="NSMCE2"/>
<dbReference type="HGNC" id="HGNC:26513">
    <property type="gene designation" value="NSMCE2"/>
</dbReference>
<dbReference type="HPA" id="ENSG00000156831">
    <property type="expression patterns" value="Low tissue specificity"/>
</dbReference>
<dbReference type="MalaCards" id="NSMCE2"/>
<dbReference type="MIM" id="617246">
    <property type="type" value="gene"/>
</dbReference>
<dbReference type="MIM" id="617253">
    <property type="type" value="phenotype"/>
</dbReference>
<dbReference type="neXtProt" id="NX_Q96MF7"/>
<dbReference type="OpenTargets" id="ENSG00000156831"/>
<dbReference type="Orphanet" id="436182">
    <property type="disease" value="Microcephalic primordial dwarfism-insulin resistance syndrome"/>
</dbReference>
<dbReference type="PharmGKB" id="PA142672355"/>
<dbReference type="VEuPathDB" id="HostDB:ENSG00000156831"/>
<dbReference type="eggNOG" id="KOG2979">
    <property type="taxonomic scope" value="Eukaryota"/>
</dbReference>
<dbReference type="GeneTree" id="ENSGT00390000013961"/>
<dbReference type="HOGENOM" id="CLU_106543_0_0_1"/>
<dbReference type="InParanoid" id="Q96MF7"/>
<dbReference type="OMA" id="NHHYDEG"/>
<dbReference type="OrthoDB" id="26899at2759"/>
<dbReference type="PAN-GO" id="Q96MF7">
    <property type="GO annotations" value="5 GO annotations based on evolutionary models"/>
</dbReference>
<dbReference type="PhylomeDB" id="Q96MF7"/>
<dbReference type="TreeFam" id="TF324383"/>
<dbReference type="PathwayCommons" id="Q96MF7"/>
<dbReference type="Reactome" id="R-HSA-3108214">
    <property type="pathway name" value="SUMOylation of DNA damage response and repair proteins"/>
</dbReference>
<dbReference type="SignaLink" id="Q96MF7"/>
<dbReference type="SIGNOR" id="Q96MF7"/>
<dbReference type="UniPathway" id="UPA00886"/>
<dbReference type="BioGRID-ORCS" id="286053">
    <property type="hits" value="439 hits in 1155 CRISPR screens"/>
</dbReference>
<dbReference type="CD-CODE" id="B5B9A610">
    <property type="entry name" value="PML body"/>
</dbReference>
<dbReference type="ChiTaRS" id="NSMCE2">
    <property type="organism name" value="human"/>
</dbReference>
<dbReference type="EvolutionaryTrace" id="Q96MF7"/>
<dbReference type="GenomeRNAi" id="286053"/>
<dbReference type="Pharos" id="Q96MF7">
    <property type="development level" value="Tbio"/>
</dbReference>
<dbReference type="PRO" id="PR:Q96MF7"/>
<dbReference type="Proteomes" id="UP000005640">
    <property type="component" value="Chromosome 8"/>
</dbReference>
<dbReference type="RNAct" id="Q96MF7">
    <property type="molecule type" value="protein"/>
</dbReference>
<dbReference type="Bgee" id="ENSG00000156831">
    <property type="expression patterns" value="Expressed in colonic epithelium and 185 other cell types or tissues"/>
</dbReference>
<dbReference type="ExpressionAtlas" id="Q96MF7">
    <property type="expression patterns" value="baseline and differential"/>
</dbReference>
<dbReference type="GO" id="GO:0000781">
    <property type="term" value="C:chromosome, telomeric region"/>
    <property type="evidence" value="ECO:0000314"/>
    <property type="project" value="UniProtKB"/>
</dbReference>
<dbReference type="GO" id="GO:0016604">
    <property type="term" value="C:nuclear body"/>
    <property type="evidence" value="ECO:0000314"/>
    <property type="project" value="HPA"/>
</dbReference>
<dbReference type="GO" id="GO:0005654">
    <property type="term" value="C:nucleoplasm"/>
    <property type="evidence" value="ECO:0000314"/>
    <property type="project" value="HPA"/>
</dbReference>
<dbReference type="GO" id="GO:0005634">
    <property type="term" value="C:nucleus"/>
    <property type="evidence" value="ECO:0000318"/>
    <property type="project" value="GO_Central"/>
</dbReference>
<dbReference type="GO" id="GO:0016605">
    <property type="term" value="C:PML body"/>
    <property type="evidence" value="ECO:0000314"/>
    <property type="project" value="UniProtKB"/>
</dbReference>
<dbReference type="GO" id="GO:0030915">
    <property type="term" value="C:Smc5-Smc6 complex"/>
    <property type="evidence" value="ECO:0000314"/>
    <property type="project" value="UniProtKB"/>
</dbReference>
<dbReference type="GO" id="GO:0061665">
    <property type="term" value="F:SUMO ligase activity"/>
    <property type="evidence" value="ECO:0000318"/>
    <property type="project" value="GO_Central"/>
</dbReference>
<dbReference type="GO" id="GO:0019789">
    <property type="term" value="F:SUMO transferase activity"/>
    <property type="evidence" value="ECO:0000314"/>
    <property type="project" value="UniProtKB"/>
</dbReference>
<dbReference type="GO" id="GO:0008270">
    <property type="term" value="F:zinc ion binding"/>
    <property type="evidence" value="ECO:0007669"/>
    <property type="project" value="UniProtKB-KW"/>
</dbReference>
<dbReference type="GO" id="GO:0051301">
    <property type="term" value="P:cell division"/>
    <property type="evidence" value="ECO:0007669"/>
    <property type="project" value="UniProtKB-KW"/>
</dbReference>
<dbReference type="GO" id="GO:0090398">
    <property type="term" value="P:cellular senescence"/>
    <property type="evidence" value="ECO:0000315"/>
    <property type="project" value="UniProtKB"/>
</dbReference>
<dbReference type="GO" id="GO:0140588">
    <property type="term" value="P:chromatin looping"/>
    <property type="evidence" value="ECO:0000303"/>
    <property type="project" value="ComplexPortal"/>
</dbReference>
<dbReference type="GO" id="GO:0000724">
    <property type="term" value="P:double-strand break repair via homologous recombination"/>
    <property type="evidence" value="ECO:0000315"/>
    <property type="project" value="UniProtKB"/>
</dbReference>
<dbReference type="GO" id="GO:0034184">
    <property type="term" value="P:positive regulation of maintenance of mitotic sister chromatid cohesion"/>
    <property type="evidence" value="ECO:0000315"/>
    <property type="project" value="UniProtKB"/>
</dbReference>
<dbReference type="GO" id="GO:0045842">
    <property type="term" value="P:positive regulation of mitotic metaphase/anaphase transition"/>
    <property type="evidence" value="ECO:0000315"/>
    <property type="project" value="UniProtKB"/>
</dbReference>
<dbReference type="GO" id="GO:0016925">
    <property type="term" value="P:protein sumoylation"/>
    <property type="evidence" value="ECO:0000318"/>
    <property type="project" value="GO_Central"/>
</dbReference>
<dbReference type="GO" id="GO:0032204">
    <property type="term" value="P:regulation of telomere maintenance"/>
    <property type="evidence" value="ECO:0000303"/>
    <property type="project" value="ComplexPortal"/>
</dbReference>
<dbReference type="GO" id="GO:0000722">
    <property type="term" value="P:telomere maintenance via recombination"/>
    <property type="evidence" value="ECO:0000315"/>
    <property type="project" value="UniProtKB"/>
</dbReference>
<dbReference type="CDD" id="cd16651">
    <property type="entry name" value="SPL-RING_NSE2"/>
    <property type="match status" value="1"/>
</dbReference>
<dbReference type="FunFam" id="3.30.40.10:FF:000343">
    <property type="entry name" value="E3 SUMO-protein ligase NSE2 isoform X1"/>
    <property type="match status" value="1"/>
</dbReference>
<dbReference type="Gene3D" id="3.30.40.10">
    <property type="entry name" value="Zinc/RING finger domain, C3HC4 (zinc finger)"/>
    <property type="match status" value="1"/>
</dbReference>
<dbReference type="InterPro" id="IPR026846">
    <property type="entry name" value="Nse2(Mms21)"/>
</dbReference>
<dbReference type="InterPro" id="IPR004181">
    <property type="entry name" value="Znf_MIZ"/>
</dbReference>
<dbReference type="InterPro" id="IPR013083">
    <property type="entry name" value="Znf_RING/FYVE/PHD"/>
</dbReference>
<dbReference type="PANTHER" id="PTHR21330">
    <property type="entry name" value="E3 SUMO-PROTEIN LIGASE NSE2"/>
    <property type="match status" value="1"/>
</dbReference>
<dbReference type="PANTHER" id="PTHR21330:SF1">
    <property type="entry name" value="E3 SUMO-PROTEIN LIGASE NSE2"/>
    <property type="match status" value="1"/>
</dbReference>
<dbReference type="Pfam" id="PF11789">
    <property type="entry name" value="zf-Nse"/>
    <property type="match status" value="1"/>
</dbReference>
<dbReference type="SUPFAM" id="SSF57850">
    <property type="entry name" value="RING/U-box"/>
    <property type="match status" value="1"/>
</dbReference>
<dbReference type="PROSITE" id="PS51044">
    <property type="entry name" value="ZF_SP_RING"/>
    <property type="match status" value="1"/>
</dbReference>
<feature type="chain" id="PRO_0000270939" description="E3 SUMO-protein ligase NSE2">
    <location>
        <begin position="1"/>
        <end position="247"/>
    </location>
</feature>
<feature type="zinc finger region" description="SP-RING-type" evidence="1">
    <location>
        <begin position="154"/>
        <end position="240"/>
    </location>
</feature>
<feature type="binding site" evidence="1">
    <location>
        <position position="185"/>
    </location>
    <ligand>
        <name>Zn(2+)</name>
        <dbReference type="ChEBI" id="CHEBI:29105"/>
    </ligand>
</feature>
<feature type="binding site" evidence="1">
    <location>
        <position position="187"/>
    </location>
    <ligand>
        <name>Zn(2+)</name>
        <dbReference type="ChEBI" id="CHEBI:29105"/>
    </ligand>
</feature>
<feature type="binding site" evidence="1">
    <location>
        <position position="210"/>
    </location>
    <ligand>
        <name>Zn(2+)</name>
        <dbReference type="ChEBI" id="CHEBI:29105"/>
    </ligand>
</feature>
<feature type="binding site" evidence="1">
    <location>
        <position position="215"/>
    </location>
    <ligand>
        <name>Zn(2+)</name>
        <dbReference type="ChEBI" id="CHEBI:29105"/>
    </ligand>
</feature>
<feature type="modified residue" description="N-acetylmethionine" evidence="11">
    <location>
        <position position="1"/>
    </location>
</feature>
<feature type="modified residue" description="Phosphoserine" evidence="12">
    <location>
        <position position="116"/>
    </location>
</feature>
<feature type="cross-link" description="Glycyl lysine isopeptide (Lys-Gly) (interchain with G-Cter in SUMO2)" evidence="13">
    <location>
        <position position="90"/>
    </location>
</feature>
<feature type="cross-link" description="Glycyl lysine isopeptide (Lys-Gly) (interchain with G-Cter in SUMO2)" evidence="13">
    <location>
        <position position="107"/>
    </location>
</feature>
<feature type="cross-link" description="Glycyl lysine isopeptide (Lys-Gly) (interchain with G-Cter in SUMO2)" evidence="13">
    <location>
        <position position="125"/>
    </location>
</feature>
<feature type="cross-link" description="Glycyl lysine isopeptide (Lys-Gly) (interchain with G-Cter in SUMO2)" evidence="13">
    <location>
        <position position="130"/>
    </location>
</feature>
<feature type="sequence variant" id="VAR_036327" description="In a breast cancer sample; somatic mutation." evidence="4">
    <original>L</original>
    <variation>F</variation>
    <location>
        <position position="27"/>
    </location>
</feature>
<feature type="sequence variant" id="VAR_050537" description="In dbSNP:rs11542104.">
    <original>V</original>
    <variation>A</variation>
    <location>
        <position position="66"/>
    </location>
</feature>
<feature type="mutagenesis site" description="Induces a strong decrease in SUMO ligase activity." evidence="2">
    <original>C</original>
    <variation>A</variation>
    <location>
        <position position="169"/>
    </location>
</feature>
<feature type="mutagenesis site" description="Induces a strong decrease in SUMO ligase activity." evidence="2">
    <original>C</original>
    <variation>A</variation>
    <location>
        <position position="185"/>
    </location>
</feature>
<feature type="mutagenesis site" description="Induces a strong decrease in SUMO ligase activity." evidence="2">
    <original>H</original>
    <variation>A</variation>
    <location>
        <position position="187"/>
    </location>
</feature>
<feature type="mutagenesis site" description="Induces a strong decrease in SUMO ligase activity." evidence="2">
    <original>C</original>
    <variation>A</variation>
    <location>
        <position position="210"/>
    </location>
</feature>
<feature type="mutagenesis site" description="Induces a strong decrease in SUMO ligase activity." evidence="2">
    <original>C</original>
    <variation>A</variation>
    <location>
        <position position="215"/>
    </location>
</feature>
<feature type="sequence conflict" description="In Ref. 1; BAB71338." evidence="10" ref="1">
    <original>F</original>
    <variation>L</variation>
    <location>
        <position position="108"/>
    </location>
</feature>
<feature type="turn" evidence="14">
    <location>
        <begin position="170"/>
        <end position="172"/>
    </location>
</feature>
<feature type="strand" evidence="14">
    <location>
        <begin position="177"/>
        <end position="185"/>
    </location>
</feature>
<feature type="strand" evidence="14">
    <location>
        <begin position="188"/>
        <end position="190"/>
    </location>
</feature>
<feature type="helix" evidence="14">
    <location>
        <begin position="191"/>
        <end position="202"/>
    </location>
</feature>
<feature type="turn" evidence="14">
    <location>
        <begin position="203"/>
        <end position="205"/>
    </location>
</feature>
<feature type="helix" evidence="14">
    <location>
        <begin position="222"/>
        <end position="224"/>
    </location>
</feature>
<feature type="strand" evidence="14">
    <location>
        <begin position="225"/>
        <end position="227"/>
    </location>
</feature>
<feature type="helix" evidence="14">
    <location>
        <begin position="229"/>
        <end position="239"/>
    </location>
</feature>
<evidence type="ECO:0000255" key="1">
    <source>
        <dbReference type="PROSITE-ProRule" id="PRU00452"/>
    </source>
</evidence>
<evidence type="ECO:0000269" key="2">
    <source>
    </source>
</evidence>
<evidence type="ECO:0000269" key="3">
    <source>
    </source>
</evidence>
<evidence type="ECO:0000269" key="4">
    <source>
    </source>
</evidence>
<evidence type="ECO:0000269" key="5">
    <source>
    </source>
</evidence>
<evidence type="ECO:0000269" key="6">
    <source>
    </source>
</evidence>
<evidence type="ECO:0000269" key="7">
    <source>
    </source>
</evidence>
<evidence type="ECO:0000269" key="8">
    <source>
    </source>
</evidence>
<evidence type="ECO:0000269" key="9">
    <source>
    </source>
</evidence>
<evidence type="ECO:0000305" key="10"/>
<evidence type="ECO:0007744" key="11">
    <source>
    </source>
</evidence>
<evidence type="ECO:0007744" key="12">
    <source>
    </source>
</evidence>
<evidence type="ECO:0007744" key="13">
    <source>
    </source>
</evidence>
<evidence type="ECO:0007829" key="14">
    <source>
        <dbReference type="PDB" id="2YU4"/>
    </source>
</evidence>
<organism>
    <name type="scientific">Homo sapiens</name>
    <name type="common">Human</name>
    <dbReference type="NCBI Taxonomy" id="9606"/>
    <lineage>
        <taxon>Eukaryota</taxon>
        <taxon>Metazoa</taxon>
        <taxon>Chordata</taxon>
        <taxon>Craniata</taxon>
        <taxon>Vertebrata</taxon>
        <taxon>Euteleostomi</taxon>
        <taxon>Mammalia</taxon>
        <taxon>Eutheria</taxon>
        <taxon>Euarchontoglires</taxon>
        <taxon>Primates</taxon>
        <taxon>Haplorrhini</taxon>
        <taxon>Catarrhini</taxon>
        <taxon>Hominidae</taxon>
        <taxon>Homo</taxon>
    </lineage>
</organism>
<keyword id="KW-0002">3D-structure</keyword>
<keyword id="KW-0007">Acetylation</keyword>
<keyword id="KW-0131">Cell cycle</keyword>
<keyword id="KW-0132">Cell division</keyword>
<keyword id="KW-0158">Chromosome</keyword>
<keyword id="KW-0227">DNA damage</keyword>
<keyword id="KW-0233">DNA recombination</keyword>
<keyword id="KW-0234">DNA repair</keyword>
<keyword id="KW-0242">Dwarfism</keyword>
<keyword id="KW-0991">Intellectual disability</keyword>
<keyword id="KW-1017">Isopeptide bond</keyword>
<keyword id="KW-0479">Metal-binding</keyword>
<keyword id="KW-0498">Mitosis</keyword>
<keyword id="KW-0539">Nucleus</keyword>
<keyword id="KW-0597">Phosphoprotein</keyword>
<keyword id="KW-1267">Proteomics identification</keyword>
<keyword id="KW-1185">Reference proteome</keyword>
<keyword id="KW-0779">Telomere</keyword>
<keyword id="KW-0808">Transferase</keyword>
<keyword id="KW-0832">Ubl conjugation</keyword>
<keyword id="KW-0833">Ubl conjugation pathway</keyword>
<keyword id="KW-0862">Zinc</keyword>
<keyword id="KW-0863">Zinc-finger</keyword>